<comment type="function">
    <text evidence="1">Catalyzes the decarboxylation of 3-octaprenyl-4-hydroxy benzoate to 2-octaprenylphenol, an intermediate step in ubiquinone biosynthesis.</text>
</comment>
<comment type="catalytic activity">
    <reaction evidence="1">
        <text>a 4-hydroxy-3-(all-trans-polyprenyl)benzoate + H(+) = a 2-(all-trans-polyprenyl)phenol + CO2</text>
        <dbReference type="Rhea" id="RHEA:41680"/>
        <dbReference type="Rhea" id="RHEA-COMP:9514"/>
        <dbReference type="Rhea" id="RHEA-COMP:9516"/>
        <dbReference type="ChEBI" id="CHEBI:1269"/>
        <dbReference type="ChEBI" id="CHEBI:15378"/>
        <dbReference type="ChEBI" id="CHEBI:16526"/>
        <dbReference type="ChEBI" id="CHEBI:78396"/>
        <dbReference type="EC" id="4.1.1.98"/>
    </reaction>
</comment>
<comment type="cofactor">
    <cofactor evidence="1">
        <name>prenylated FMN</name>
        <dbReference type="ChEBI" id="CHEBI:87746"/>
    </cofactor>
    <text evidence="1">Binds 1 prenylated FMN per subunit.</text>
</comment>
<comment type="cofactor">
    <cofactor evidence="1">
        <name>Mn(2+)</name>
        <dbReference type="ChEBI" id="CHEBI:29035"/>
    </cofactor>
</comment>
<comment type="pathway">
    <text evidence="1">Cofactor biosynthesis; ubiquinone biosynthesis.</text>
</comment>
<comment type="subunit">
    <text evidence="1">Homohexamer.</text>
</comment>
<comment type="subcellular location">
    <subcellularLocation>
        <location evidence="1">Cell membrane</location>
        <topology evidence="1">Peripheral membrane protein</topology>
    </subcellularLocation>
</comment>
<comment type="similarity">
    <text evidence="1">Belongs to the UbiD family.</text>
</comment>
<organism>
    <name type="scientific">Nitrosococcus oceani (strain ATCC 19707 / BCRC 17464 / JCM 30415 / NCIMB 11848 / C-107)</name>
    <dbReference type="NCBI Taxonomy" id="323261"/>
    <lineage>
        <taxon>Bacteria</taxon>
        <taxon>Pseudomonadati</taxon>
        <taxon>Pseudomonadota</taxon>
        <taxon>Gammaproteobacteria</taxon>
        <taxon>Chromatiales</taxon>
        <taxon>Chromatiaceae</taxon>
        <taxon>Nitrosococcus</taxon>
    </lineage>
</organism>
<reference key="1">
    <citation type="journal article" date="2006" name="Appl. Environ. Microbiol.">
        <title>Complete genome sequence of the marine, chemolithoautotrophic, ammonia-oxidizing bacterium Nitrosococcus oceani ATCC 19707.</title>
        <authorList>
            <person name="Klotz M.G."/>
            <person name="Arp D.J."/>
            <person name="Chain P.S.G."/>
            <person name="El-Sheikh A.F."/>
            <person name="Hauser L.J."/>
            <person name="Hommes N.G."/>
            <person name="Larimer F.W."/>
            <person name="Malfatti S.A."/>
            <person name="Norton J.M."/>
            <person name="Poret-Peterson A.T."/>
            <person name="Vergez L.M."/>
            <person name="Ward B.B."/>
        </authorList>
    </citation>
    <scope>NUCLEOTIDE SEQUENCE [LARGE SCALE GENOMIC DNA]</scope>
    <source>
        <strain>ATCC 19707 / BCRC 17464 / JCM 30415 / NCIMB 11848 / C-107</strain>
    </source>
</reference>
<dbReference type="EC" id="4.1.1.98" evidence="1"/>
<dbReference type="EMBL" id="CP000127">
    <property type="protein sequence ID" value="ABA56741.1"/>
    <property type="molecule type" value="Genomic_DNA"/>
</dbReference>
<dbReference type="RefSeq" id="WP_002812864.1">
    <property type="nucleotide sequence ID" value="NC_007484.1"/>
</dbReference>
<dbReference type="SMR" id="Q3JEK5"/>
<dbReference type="FunCoup" id="Q3JEK5">
    <property type="interactions" value="356"/>
</dbReference>
<dbReference type="STRING" id="323261.Noc_0211"/>
<dbReference type="KEGG" id="noc:Noc_0211"/>
<dbReference type="eggNOG" id="COG0043">
    <property type="taxonomic scope" value="Bacteria"/>
</dbReference>
<dbReference type="HOGENOM" id="CLU_023348_4_1_6"/>
<dbReference type="InParanoid" id="Q3JEK5"/>
<dbReference type="UniPathway" id="UPA00232"/>
<dbReference type="Proteomes" id="UP000006838">
    <property type="component" value="Chromosome"/>
</dbReference>
<dbReference type="GO" id="GO:0005829">
    <property type="term" value="C:cytosol"/>
    <property type="evidence" value="ECO:0007669"/>
    <property type="project" value="TreeGrafter"/>
</dbReference>
<dbReference type="GO" id="GO:0005886">
    <property type="term" value="C:plasma membrane"/>
    <property type="evidence" value="ECO:0007669"/>
    <property type="project" value="UniProtKB-SubCell"/>
</dbReference>
<dbReference type="GO" id="GO:0008694">
    <property type="term" value="F:3-octaprenyl-4-hydroxybenzoate carboxy-lyase activity"/>
    <property type="evidence" value="ECO:0007669"/>
    <property type="project" value="UniProtKB-UniRule"/>
</dbReference>
<dbReference type="GO" id="GO:0046872">
    <property type="term" value="F:metal ion binding"/>
    <property type="evidence" value="ECO:0007669"/>
    <property type="project" value="UniProtKB-KW"/>
</dbReference>
<dbReference type="GO" id="GO:0006744">
    <property type="term" value="P:ubiquinone biosynthetic process"/>
    <property type="evidence" value="ECO:0007669"/>
    <property type="project" value="UniProtKB-UniRule"/>
</dbReference>
<dbReference type="FunFam" id="1.20.5.570:FF:000001">
    <property type="entry name" value="3-octaprenyl-4-hydroxybenzoate carboxy-lyase"/>
    <property type="match status" value="1"/>
</dbReference>
<dbReference type="FunFam" id="3.40.1670.10:FF:000001">
    <property type="entry name" value="3-octaprenyl-4-hydroxybenzoate carboxy-lyase"/>
    <property type="match status" value="1"/>
</dbReference>
<dbReference type="Gene3D" id="1.20.5.570">
    <property type="entry name" value="Single helix bin"/>
    <property type="match status" value="1"/>
</dbReference>
<dbReference type="Gene3D" id="3.40.1670.10">
    <property type="entry name" value="UbiD C-terminal domain-like"/>
    <property type="match status" value="1"/>
</dbReference>
<dbReference type="HAMAP" id="MF_01636">
    <property type="entry name" value="UbiD"/>
    <property type="match status" value="1"/>
</dbReference>
<dbReference type="InterPro" id="IPR002830">
    <property type="entry name" value="UbiD"/>
</dbReference>
<dbReference type="InterPro" id="IPR049381">
    <property type="entry name" value="UbiD-like_C"/>
</dbReference>
<dbReference type="InterPro" id="IPR049383">
    <property type="entry name" value="UbiD-like_N"/>
</dbReference>
<dbReference type="InterPro" id="IPR023677">
    <property type="entry name" value="UbiD_bacteria"/>
</dbReference>
<dbReference type="InterPro" id="IPR048304">
    <property type="entry name" value="UbiD_Rift_dom"/>
</dbReference>
<dbReference type="NCBIfam" id="NF008175">
    <property type="entry name" value="PRK10922.1"/>
    <property type="match status" value="1"/>
</dbReference>
<dbReference type="NCBIfam" id="TIGR00148">
    <property type="entry name" value="UbiD family decarboxylase"/>
    <property type="match status" value="1"/>
</dbReference>
<dbReference type="PANTHER" id="PTHR30108">
    <property type="entry name" value="3-OCTAPRENYL-4-HYDROXYBENZOATE CARBOXY-LYASE-RELATED"/>
    <property type="match status" value="1"/>
</dbReference>
<dbReference type="PANTHER" id="PTHR30108:SF17">
    <property type="entry name" value="FERULIC ACID DECARBOXYLASE 1"/>
    <property type="match status" value="1"/>
</dbReference>
<dbReference type="Pfam" id="PF01977">
    <property type="entry name" value="UbiD"/>
    <property type="match status" value="1"/>
</dbReference>
<dbReference type="Pfam" id="PF20696">
    <property type="entry name" value="UbiD_C"/>
    <property type="match status" value="1"/>
</dbReference>
<dbReference type="Pfam" id="PF20695">
    <property type="entry name" value="UbiD_N"/>
    <property type="match status" value="1"/>
</dbReference>
<dbReference type="SUPFAM" id="SSF50475">
    <property type="entry name" value="FMN-binding split barrel"/>
    <property type="match status" value="1"/>
</dbReference>
<dbReference type="SUPFAM" id="SSF143968">
    <property type="entry name" value="UbiD C-terminal domain-like"/>
    <property type="match status" value="1"/>
</dbReference>
<name>UBID_NITOC</name>
<gene>
    <name evidence="1" type="primary">ubiD</name>
    <name type="ordered locus">Noc_0211</name>
</gene>
<sequence>MKYKDLRDFIAKLEAEGELKRITVEVDPYLEMTEICDRVLHAGGPALLFERPKGASMPVLGNLFGTPRRVAQGMGEDSVAALREVGKLLAFLKEPDPPRGMKEAWRALPIFKKVLDMAPKIVRSAPCQEVILEGSQVDLSQIPIQTCWPGDIAPLITWGLVVTKGPYKERQNMGIYRQQVLGPNRVIMRWLAHRGGALDFQAWQQAHPGKPFPIAVALGADPATILGAVTPVPDTLSEYAFAGLLRGSKTELTRCLGSGLQVPASAEIVLEGYLKPGDEANEGPFGDHTGYYNEVEKFPVFTIERLTHRRHPIYHSTYTGRPPDEPAVLGVALNEVFIPILQKQFPEIVDFYLPPEGCSYRLAVVTMRKQYPGHAKRVMLGVWSFLRQFMYTKFVIVTDEDINARDWKDVIWAMTTRMDPARDCVIIENTPIDYLDFASPVSGLGSKIGFDVTHKWKGETQREWGQPITMDNAVKKRVDEMWDGMGL</sequence>
<keyword id="KW-1003">Cell membrane</keyword>
<keyword id="KW-0210">Decarboxylase</keyword>
<keyword id="KW-0285">Flavoprotein</keyword>
<keyword id="KW-0288">FMN</keyword>
<keyword id="KW-0456">Lyase</keyword>
<keyword id="KW-0464">Manganese</keyword>
<keyword id="KW-0472">Membrane</keyword>
<keyword id="KW-0479">Metal-binding</keyword>
<keyword id="KW-1185">Reference proteome</keyword>
<keyword id="KW-0831">Ubiquinone biosynthesis</keyword>
<feature type="chain" id="PRO_0000267674" description="3-octaprenyl-4-hydroxybenzoate carboxy-lyase">
    <location>
        <begin position="1"/>
        <end position="487"/>
    </location>
</feature>
<feature type="active site" description="Proton donor" evidence="1">
    <location>
        <position position="287"/>
    </location>
</feature>
<feature type="binding site" evidence="1">
    <location>
        <position position="172"/>
    </location>
    <ligand>
        <name>Mn(2+)</name>
        <dbReference type="ChEBI" id="CHEBI:29035"/>
    </ligand>
</feature>
<feature type="binding site" evidence="1">
    <location>
        <begin position="175"/>
        <end position="177"/>
    </location>
    <ligand>
        <name>prenylated FMN</name>
        <dbReference type="ChEBI" id="CHEBI:87746"/>
    </ligand>
</feature>
<feature type="binding site" evidence="1">
    <location>
        <begin position="189"/>
        <end position="191"/>
    </location>
    <ligand>
        <name>prenylated FMN</name>
        <dbReference type="ChEBI" id="CHEBI:87746"/>
    </ligand>
</feature>
<feature type="binding site" evidence="1">
    <location>
        <begin position="194"/>
        <end position="195"/>
    </location>
    <ligand>
        <name>prenylated FMN</name>
        <dbReference type="ChEBI" id="CHEBI:87746"/>
    </ligand>
</feature>
<feature type="binding site" evidence="1">
    <location>
        <position position="238"/>
    </location>
    <ligand>
        <name>Mn(2+)</name>
        <dbReference type="ChEBI" id="CHEBI:29035"/>
    </ligand>
</feature>
<accession>Q3JEK5</accession>
<evidence type="ECO:0000255" key="1">
    <source>
        <dbReference type="HAMAP-Rule" id="MF_01636"/>
    </source>
</evidence>
<protein>
    <recommendedName>
        <fullName evidence="1">3-octaprenyl-4-hydroxybenzoate carboxy-lyase</fullName>
        <ecNumber evidence="1">4.1.1.98</ecNumber>
    </recommendedName>
    <alternativeName>
        <fullName evidence="1">Polyprenyl p-hydroxybenzoate decarboxylase</fullName>
    </alternativeName>
</protein>
<proteinExistence type="inferred from homology"/>